<protein>
    <recommendedName>
        <fullName>Putative L-type lectin-domain containing receptor kinase I.11</fullName>
        <shortName>LecRK-I.11</shortName>
        <ecNumber>2.7.11.1</ecNumber>
    </recommendedName>
</protein>
<evidence type="ECO:0000250" key="1"/>
<evidence type="ECO:0000255" key="2"/>
<evidence type="ECO:0000255" key="3">
    <source>
        <dbReference type="PROSITE-ProRule" id="PRU00159"/>
    </source>
</evidence>
<evidence type="ECO:0000255" key="4">
    <source>
        <dbReference type="PROSITE-ProRule" id="PRU10027"/>
    </source>
</evidence>
<evidence type="ECO:0000305" key="5"/>
<sequence length="675" mass="74848">MASERLHLILLVFFNHLTFLLSQQEEAGFIYNGFGQAQAGLHLDGAAKILFPDGLLQLTNASTQQMGHAFFKKPFKFDSYEKKLSFSTHFVCALVPKPGADGGHGIAFVVSSSIDFTQADPTQYLGLLNISTNGSPSSQLLAIELDTVESAEFDDIDKNHVGIDIKSLNSVESASASYFSNAKGKNQSIKLLSGDPIQIWVDYEGALLNVTVAPLSIQKPNHPLLSRSINLTDIFPDRKLFFGFSAATGTLVSYQYILGWSFSRSRMLLQSLDFSKLPQIPHPKAKQEQTSPLLIVLLMLLVLIMLAVLGGIYLYRRKKYAEVREVWEKEYSPHRFSYKSLYKATNRFDKDGRLGKGGFGEVYRGNLPHVGDIAVKRVCHDAKQGMKQFVAEVVTMGSLKHRNLVPLLGYCRRKGELLLVSEYMSNGSLDQYLFHREKPALSWSQRLVILKDIASALSYLHTGANQVVLHRDIKASNVMLDSEFNGRLGDFGMARFEDYGDSVPVTAAVGTMGYMAPELTTMGTSTRTDVYAFGVLMLEVTCGRRPLDPKIPSEKRHLIKWVCDCWRRDSIVDAIDTRLGGQYSVEETVMVLKLGLICTNIVAESRPTMEQVIQYINQNLPLPNFSPGSLGIGVSTPVLLESVFNSRSSLAPSISPPSSHNSMFVTHTITYGDGR</sequence>
<name>LK111_ARATH</name>
<feature type="signal peptide" evidence="2">
    <location>
        <begin position="1"/>
        <end position="22"/>
    </location>
</feature>
<feature type="chain" id="PRO_0000403080" description="Putative L-type lectin-domain containing receptor kinase I.11">
    <location>
        <begin position="23"/>
        <end position="675"/>
    </location>
</feature>
<feature type="topological domain" description="Extracellular" evidence="2">
    <location>
        <begin position="23"/>
        <end position="292"/>
    </location>
</feature>
<feature type="transmembrane region" description="Helical" evidence="2">
    <location>
        <begin position="293"/>
        <end position="313"/>
    </location>
</feature>
<feature type="topological domain" description="Cytoplasmic" evidence="2">
    <location>
        <begin position="314"/>
        <end position="675"/>
    </location>
</feature>
<feature type="domain" description="Protein kinase" evidence="3">
    <location>
        <begin position="348"/>
        <end position="620"/>
    </location>
</feature>
<feature type="region of interest" description="Legume-lectin like">
    <location>
        <begin position="27"/>
        <end position="263"/>
    </location>
</feature>
<feature type="active site" description="Proton acceptor" evidence="3 4">
    <location>
        <position position="472"/>
    </location>
</feature>
<feature type="binding site" evidence="3">
    <location>
        <begin position="354"/>
        <end position="362"/>
    </location>
    <ligand>
        <name>ATP</name>
        <dbReference type="ChEBI" id="CHEBI:30616"/>
    </ligand>
</feature>
<feature type="binding site" evidence="3">
    <location>
        <position position="376"/>
    </location>
    <ligand>
        <name>ATP</name>
        <dbReference type="ChEBI" id="CHEBI:30616"/>
    </ligand>
</feature>
<feature type="glycosylation site" description="N-linked (GlcNAc...) asparagine" evidence="2">
    <location>
        <position position="60"/>
    </location>
</feature>
<feature type="glycosylation site" description="N-linked (GlcNAc...) asparagine" evidence="2">
    <location>
        <position position="129"/>
    </location>
</feature>
<feature type="glycosylation site" description="N-linked (GlcNAc...) asparagine" evidence="2">
    <location>
        <position position="186"/>
    </location>
</feature>
<feature type="glycosylation site" description="N-linked (GlcNAc...) asparagine" evidence="2">
    <location>
        <position position="209"/>
    </location>
</feature>
<feature type="glycosylation site" description="N-linked (GlcNAc...) asparagine" evidence="2">
    <location>
        <position position="230"/>
    </location>
</feature>
<accession>Q9FJI4</accession>
<dbReference type="EC" id="2.7.11.1"/>
<dbReference type="EMBL" id="AB015471">
    <property type="protein sequence ID" value="BAB10969.1"/>
    <property type="molecule type" value="Genomic_DNA"/>
</dbReference>
<dbReference type="EMBL" id="CP002688">
    <property type="protein sequence ID" value="AED97308.1"/>
    <property type="molecule type" value="Genomic_DNA"/>
</dbReference>
<dbReference type="RefSeq" id="NP_200840.1">
    <property type="nucleotide sequence ID" value="NM_125425.1"/>
</dbReference>
<dbReference type="SMR" id="Q9FJI4"/>
<dbReference type="BioGRID" id="21398">
    <property type="interactions" value="14"/>
</dbReference>
<dbReference type="IntAct" id="Q9FJI4">
    <property type="interactions" value="14"/>
</dbReference>
<dbReference type="STRING" id="3702.Q9FJI4"/>
<dbReference type="GlyCosmos" id="Q9FJI4">
    <property type="glycosylation" value="5 sites, No reported glycans"/>
</dbReference>
<dbReference type="GlyGen" id="Q9FJI4">
    <property type="glycosylation" value="5 sites"/>
</dbReference>
<dbReference type="iPTMnet" id="Q9FJI4"/>
<dbReference type="PaxDb" id="3702-AT5G60320.1"/>
<dbReference type="ProteomicsDB" id="238421"/>
<dbReference type="EnsemblPlants" id="AT5G60320.1">
    <property type="protein sequence ID" value="AT5G60320.1"/>
    <property type="gene ID" value="AT5G60320"/>
</dbReference>
<dbReference type="GeneID" id="836154"/>
<dbReference type="Gramene" id="AT5G60320.1">
    <property type="protein sequence ID" value="AT5G60320.1"/>
    <property type="gene ID" value="AT5G60320"/>
</dbReference>
<dbReference type="KEGG" id="ath:AT5G60320"/>
<dbReference type="Araport" id="AT5G60320"/>
<dbReference type="TAIR" id="AT5G60320">
    <property type="gene designation" value="LECRK-I.11"/>
</dbReference>
<dbReference type="eggNOG" id="ENOG502QSJ4">
    <property type="taxonomic scope" value="Eukaryota"/>
</dbReference>
<dbReference type="HOGENOM" id="CLU_000288_62_3_1"/>
<dbReference type="InParanoid" id="Q9FJI4"/>
<dbReference type="OMA" id="TMGSLKH"/>
<dbReference type="PhylomeDB" id="Q9FJI4"/>
<dbReference type="PRO" id="PR:Q9FJI4"/>
<dbReference type="Proteomes" id="UP000006548">
    <property type="component" value="Chromosome 5"/>
</dbReference>
<dbReference type="ExpressionAtlas" id="Q9FJI4">
    <property type="expression patterns" value="baseline and differential"/>
</dbReference>
<dbReference type="GO" id="GO:0005886">
    <property type="term" value="C:plasma membrane"/>
    <property type="evidence" value="ECO:0000250"/>
    <property type="project" value="UniProtKB"/>
</dbReference>
<dbReference type="GO" id="GO:0009506">
    <property type="term" value="C:plasmodesma"/>
    <property type="evidence" value="ECO:0007005"/>
    <property type="project" value="TAIR"/>
</dbReference>
<dbReference type="GO" id="GO:0005524">
    <property type="term" value="F:ATP binding"/>
    <property type="evidence" value="ECO:0007669"/>
    <property type="project" value="UniProtKB-KW"/>
</dbReference>
<dbReference type="GO" id="GO:0030246">
    <property type="term" value="F:carbohydrate binding"/>
    <property type="evidence" value="ECO:0007669"/>
    <property type="project" value="UniProtKB-KW"/>
</dbReference>
<dbReference type="GO" id="GO:0106310">
    <property type="term" value="F:protein serine kinase activity"/>
    <property type="evidence" value="ECO:0007669"/>
    <property type="project" value="RHEA"/>
</dbReference>
<dbReference type="GO" id="GO:0004674">
    <property type="term" value="F:protein serine/threonine kinase activity"/>
    <property type="evidence" value="ECO:0007669"/>
    <property type="project" value="UniProtKB-KW"/>
</dbReference>
<dbReference type="CDD" id="cd06899">
    <property type="entry name" value="lectin_legume_LecRK_Arcelin_ConA"/>
    <property type="match status" value="1"/>
</dbReference>
<dbReference type="CDD" id="cd14066">
    <property type="entry name" value="STKc_IRAK"/>
    <property type="match status" value="1"/>
</dbReference>
<dbReference type="FunFam" id="3.30.200.20:FF:000451">
    <property type="entry name" value="L-type lectin-domain containing receptor kinase I.9"/>
    <property type="match status" value="1"/>
</dbReference>
<dbReference type="FunFam" id="1.10.510.10:FF:000108">
    <property type="entry name" value="L-type lectin-domain containing receptor kinase S.4"/>
    <property type="match status" value="1"/>
</dbReference>
<dbReference type="FunFam" id="2.60.120.200:FF:000096">
    <property type="entry name" value="L-type lectin-domain containing receptor kinase V.9"/>
    <property type="match status" value="1"/>
</dbReference>
<dbReference type="Gene3D" id="2.60.120.200">
    <property type="match status" value="1"/>
</dbReference>
<dbReference type="Gene3D" id="3.30.200.20">
    <property type="entry name" value="Phosphorylase Kinase, domain 1"/>
    <property type="match status" value="1"/>
</dbReference>
<dbReference type="Gene3D" id="1.10.510.10">
    <property type="entry name" value="Transferase(Phosphotransferase) domain 1"/>
    <property type="match status" value="1"/>
</dbReference>
<dbReference type="InterPro" id="IPR013320">
    <property type="entry name" value="ConA-like_dom_sf"/>
</dbReference>
<dbReference type="InterPro" id="IPR011009">
    <property type="entry name" value="Kinase-like_dom_sf"/>
</dbReference>
<dbReference type="InterPro" id="IPR050528">
    <property type="entry name" value="L-type_Lectin-RKs"/>
</dbReference>
<dbReference type="InterPro" id="IPR001220">
    <property type="entry name" value="Legume_lectin_dom"/>
</dbReference>
<dbReference type="InterPro" id="IPR000719">
    <property type="entry name" value="Prot_kinase_dom"/>
</dbReference>
<dbReference type="InterPro" id="IPR017441">
    <property type="entry name" value="Protein_kinase_ATP_BS"/>
</dbReference>
<dbReference type="InterPro" id="IPR008271">
    <property type="entry name" value="Ser/Thr_kinase_AS"/>
</dbReference>
<dbReference type="PANTHER" id="PTHR27007">
    <property type="match status" value="1"/>
</dbReference>
<dbReference type="Pfam" id="PF00139">
    <property type="entry name" value="Lectin_legB"/>
    <property type="match status" value="1"/>
</dbReference>
<dbReference type="Pfam" id="PF00069">
    <property type="entry name" value="Pkinase"/>
    <property type="match status" value="1"/>
</dbReference>
<dbReference type="SMART" id="SM00220">
    <property type="entry name" value="S_TKc"/>
    <property type="match status" value="1"/>
</dbReference>
<dbReference type="SUPFAM" id="SSF49899">
    <property type="entry name" value="Concanavalin A-like lectins/glucanases"/>
    <property type="match status" value="1"/>
</dbReference>
<dbReference type="SUPFAM" id="SSF56112">
    <property type="entry name" value="Protein kinase-like (PK-like)"/>
    <property type="match status" value="1"/>
</dbReference>
<dbReference type="PROSITE" id="PS00107">
    <property type="entry name" value="PROTEIN_KINASE_ATP"/>
    <property type="match status" value="1"/>
</dbReference>
<dbReference type="PROSITE" id="PS50011">
    <property type="entry name" value="PROTEIN_KINASE_DOM"/>
    <property type="match status" value="1"/>
</dbReference>
<dbReference type="PROSITE" id="PS00108">
    <property type="entry name" value="PROTEIN_KINASE_ST"/>
    <property type="match status" value="1"/>
</dbReference>
<organism>
    <name type="scientific">Arabidopsis thaliana</name>
    <name type="common">Mouse-ear cress</name>
    <dbReference type="NCBI Taxonomy" id="3702"/>
    <lineage>
        <taxon>Eukaryota</taxon>
        <taxon>Viridiplantae</taxon>
        <taxon>Streptophyta</taxon>
        <taxon>Embryophyta</taxon>
        <taxon>Tracheophyta</taxon>
        <taxon>Spermatophyta</taxon>
        <taxon>Magnoliopsida</taxon>
        <taxon>eudicotyledons</taxon>
        <taxon>Gunneridae</taxon>
        <taxon>Pentapetalae</taxon>
        <taxon>rosids</taxon>
        <taxon>malvids</taxon>
        <taxon>Brassicales</taxon>
        <taxon>Brassicaceae</taxon>
        <taxon>Camelineae</taxon>
        <taxon>Arabidopsis</taxon>
    </lineage>
</organism>
<comment type="catalytic activity">
    <reaction>
        <text>L-seryl-[protein] + ATP = O-phospho-L-seryl-[protein] + ADP + H(+)</text>
        <dbReference type="Rhea" id="RHEA:17989"/>
        <dbReference type="Rhea" id="RHEA-COMP:9863"/>
        <dbReference type="Rhea" id="RHEA-COMP:11604"/>
        <dbReference type="ChEBI" id="CHEBI:15378"/>
        <dbReference type="ChEBI" id="CHEBI:29999"/>
        <dbReference type="ChEBI" id="CHEBI:30616"/>
        <dbReference type="ChEBI" id="CHEBI:83421"/>
        <dbReference type="ChEBI" id="CHEBI:456216"/>
        <dbReference type="EC" id="2.7.11.1"/>
    </reaction>
</comment>
<comment type="catalytic activity">
    <reaction>
        <text>L-threonyl-[protein] + ATP = O-phospho-L-threonyl-[protein] + ADP + H(+)</text>
        <dbReference type="Rhea" id="RHEA:46608"/>
        <dbReference type="Rhea" id="RHEA-COMP:11060"/>
        <dbReference type="Rhea" id="RHEA-COMP:11605"/>
        <dbReference type="ChEBI" id="CHEBI:15378"/>
        <dbReference type="ChEBI" id="CHEBI:30013"/>
        <dbReference type="ChEBI" id="CHEBI:30616"/>
        <dbReference type="ChEBI" id="CHEBI:61977"/>
        <dbReference type="ChEBI" id="CHEBI:456216"/>
        <dbReference type="EC" id="2.7.11.1"/>
    </reaction>
</comment>
<comment type="subcellular location">
    <subcellularLocation>
        <location evidence="1">Cell membrane</location>
        <topology evidence="1">Single-pass type I membrane protein</topology>
    </subcellularLocation>
</comment>
<comment type="similarity">
    <text evidence="5">In the C-terminal section; belongs to the protein kinase superfamily. Ser/Thr protein kinase family.</text>
</comment>
<comment type="similarity">
    <text evidence="5">In the N-terminal section; belongs to the leguminous lectin family.</text>
</comment>
<reference key="1">
    <citation type="journal article" date="1998" name="DNA Res.">
        <title>Structural analysis of Arabidopsis thaliana chromosome 5. VII. Sequence features of the regions of 1,013,767 bp covered by sixteen physically assigned P1 and TAC clones.</title>
        <authorList>
            <person name="Nakamura Y."/>
            <person name="Sato S."/>
            <person name="Asamizu E."/>
            <person name="Kaneko T."/>
            <person name="Kotani H."/>
            <person name="Miyajima N."/>
            <person name="Tabata S."/>
        </authorList>
    </citation>
    <scope>NUCLEOTIDE SEQUENCE [LARGE SCALE GENOMIC DNA]</scope>
    <source>
        <strain>cv. Columbia</strain>
    </source>
</reference>
<reference key="2">
    <citation type="journal article" date="2017" name="Plant J.">
        <title>Araport11: a complete reannotation of the Arabidopsis thaliana reference genome.</title>
        <authorList>
            <person name="Cheng C.Y."/>
            <person name="Krishnakumar V."/>
            <person name="Chan A.P."/>
            <person name="Thibaud-Nissen F."/>
            <person name="Schobel S."/>
            <person name="Town C.D."/>
        </authorList>
    </citation>
    <scope>GENOME REANNOTATION</scope>
    <source>
        <strain>cv. Columbia</strain>
    </source>
</reference>
<reference key="3">
    <citation type="journal article" date="2002" name="Crit. Rev. Plant Sci.">
        <title>Lectin receptor kinases in plants.</title>
        <authorList>
            <person name="Barre A."/>
            <person name="Herve C."/>
            <person name="Lescure B."/>
            <person name="Rouge P."/>
        </authorList>
    </citation>
    <scope>GENE FAMILY</scope>
</reference>
<reference key="4">
    <citation type="journal article" date="2009" name="J. Exp. Bot.">
        <title>Arabidopsis L-type lectin receptor kinases: phylogeny, classification, and expression profiles.</title>
        <authorList>
            <person name="Bouwmeester K."/>
            <person name="Govers F."/>
        </authorList>
    </citation>
    <scope>GENE FAMILY</scope>
    <scope>NOMENCLATURE</scope>
</reference>
<gene>
    <name type="primary">LECRK111</name>
    <name type="ordered locus">At5g60320</name>
    <name type="ORF">K9B18.1</name>
</gene>
<proteinExistence type="inferred from homology"/>
<keyword id="KW-0067">ATP-binding</keyword>
<keyword id="KW-1003">Cell membrane</keyword>
<keyword id="KW-0325">Glycoprotein</keyword>
<keyword id="KW-0418">Kinase</keyword>
<keyword id="KW-0430">Lectin</keyword>
<keyword id="KW-0472">Membrane</keyword>
<keyword id="KW-0547">Nucleotide-binding</keyword>
<keyword id="KW-0675">Receptor</keyword>
<keyword id="KW-1185">Reference proteome</keyword>
<keyword id="KW-0723">Serine/threonine-protein kinase</keyword>
<keyword id="KW-0732">Signal</keyword>
<keyword id="KW-0808">Transferase</keyword>
<keyword id="KW-0812">Transmembrane</keyword>
<keyword id="KW-1133">Transmembrane helix</keyword>